<proteinExistence type="inferred from homology"/>
<accession>O40626</accession>
<accession>B3SRQ4</accession>
<accession>Q82042</accession>
<name>NSP1_ROTH6</name>
<dbReference type="EMBL" id="D38151">
    <property type="protein sequence ID" value="BAA20542.1"/>
    <property type="molecule type" value="Genomic_RNA"/>
</dbReference>
<dbReference type="EMBL" id="Z32552">
    <property type="protein sequence ID" value="CAA83550.1"/>
    <property type="molecule type" value="Genomic_RNA"/>
</dbReference>
<dbReference type="EMBL" id="EF672557">
    <property type="protein sequence ID" value="ABV53229.1"/>
    <property type="molecule type" value="Genomic_DNA"/>
</dbReference>
<dbReference type="SMR" id="O40626"/>
<dbReference type="Proteomes" id="UP000001455">
    <property type="component" value="Genome"/>
</dbReference>
<dbReference type="GO" id="GO:0030430">
    <property type="term" value="C:host cell cytoplasm"/>
    <property type="evidence" value="ECO:0007669"/>
    <property type="project" value="UniProtKB-UniRule"/>
</dbReference>
<dbReference type="GO" id="GO:0044163">
    <property type="term" value="C:host cytoskeleton"/>
    <property type="evidence" value="ECO:0007669"/>
    <property type="project" value="UniProtKB-SubCell"/>
</dbReference>
<dbReference type="GO" id="GO:0046872">
    <property type="term" value="F:metal ion binding"/>
    <property type="evidence" value="ECO:0007669"/>
    <property type="project" value="UniProtKB-UniRule"/>
</dbReference>
<dbReference type="GO" id="GO:0003723">
    <property type="term" value="F:RNA binding"/>
    <property type="evidence" value="ECO:0007669"/>
    <property type="project" value="UniProtKB-UniRule"/>
</dbReference>
<dbReference type="GO" id="GO:0039548">
    <property type="term" value="P:symbiont-mediated suppression of host cytoplasmic pattern recognition receptor signaling pathway via inhibition of IRF3 activity"/>
    <property type="evidence" value="ECO:0007669"/>
    <property type="project" value="UniProtKB-UniRule"/>
</dbReference>
<dbReference type="GO" id="GO:0039557">
    <property type="term" value="P:symbiont-mediated suppression of host cytoplasmic pattern recognition receptor signaling pathway via inhibition of IRF7 activity"/>
    <property type="evidence" value="ECO:0007669"/>
    <property type="project" value="UniProtKB-UniRule"/>
</dbReference>
<dbReference type="GO" id="GO:0085034">
    <property type="term" value="P:symbiont-mediated suppression of host NF-kappaB cascade"/>
    <property type="evidence" value="ECO:0007669"/>
    <property type="project" value="UniProtKB-UniRule"/>
</dbReference>
<dbReference type="HAMAP" id="MF_04088">
    <property type="entry name" value="ROTA_NSP1"/>
    <property type="match status" value="1"/>
</dbReference>
<dbReference type="InterPro" id="IPR002148">
    <property type="entry name" value="Rotavirus_NSP1"/>
</dbReference>
<dbReference type="Pfam" id="PF00981">
    <property type="entry name" value="Rota_NS53"/>
    <property type="match status" value="1"/>
</dbReference>
<feature type="chain" id="PRO_0000369081" description="Non-structural protein 1">
    <location>
        <begin position="1"/>
        <end position="486"/>
    </location>
</feature>
<feature type="region of interest" description="RNA-binding" evidence="1">
    <location>
        <begin position="1"/>
        <end position="81"/>
    </location>
</feature>
<feature type="region of interest" description="Zinc-binding domain" evidence="1">
    <location>
        <begin position="42"/>
        <end position="79"/>
    </location>
</feature>
<feature type="region of interest" description="Important for cytoskeleton localization" evidence="1">
    <location>
        <begin position="82"/>
        <end position="176"/>
    </location>
</feature>
<feature type="region of interest" description="Interaction with host IRF3" evidence="1">
    <location>
        <begin position="317"/>
        <end position="486"/>
    </location>
</feature>
<feature type="short sequence motif" description="IKBKB-like degron (ILD) motif" evidence="1">
    <location>
        <begin position="479"/>
        <end position="483"/>
    </location>
</feature>
<feature type="short sequence motif" description="pLxIS motif" evidence="1">
    <location>
        <begin position="480"/>
        <end position="483"/>
    </location>
</feature>
<feature type="sequence conflict" description="In Ref. 2; CAA83550." ref="2">
    <original>T</original>
    <variation>S</variation>
    <location>
        <position position="3"/>
    </location>
</feature>
<feature type="sequence conflict" description="In Ref. 2; CAA83550." ref="2">
    <original>KLG</original>
    <variation>NLP</variation>
    <location>
        <begin position="23"/>
        <end position="25"/>
    </location>
</feature>
<feature type="sequence conflict" description="In Ref. 2; CAA83550." ref="2">
    <original>C</original>
    <variation>Y</variation>
    <location>
        <position position="42"/>
    </location>
</feature>
<feature type="sequence conflict" description="In Ref. 1; BAA20542." ref="1">
    <original>S</original>
    <variation>T</variation>
    <location>
        <position position="188"/>
    </location>
</feature>
<feature type="sequence conflict" description="In Ref. 1; BAA20542." ref="1">
    <original>R</original>
    <variation>T</variation>
    <location>
        <position position="247"/>
    </location>
</feature>
<feature type="sequence conflict" description="In Ref. 1; BAA20542." ref="1">
    <original>H</original>
    <variation>D</variation>
    <location>
        <position position="361"/>
    </location>
</feature>
<feature type="sequence conflict" description="In Ref. 2; CAA83550." ref="2">
    <original>Y</original>
    <variation>D</variation>
    <location>
        <position position="445"/>
    </location>
</feature>
<feature type="sequence conflict" description="In Ref. 2; CAA83550." ref="2">
    <original>T</original>
    <variation>S</variation>
    <location>
        <position position="459"/>
    </location>
</feature>
<sequence length="486" mass="57766">MATFKDACYQYKKLNKLNNAILKLGANDVWRSSTLTKRKGWCLDCCQHTDLTYCQGCLIYHVCEWCSQYSRCFLDDDPHLLRMRTFRNEVTKSDLENLINMYDTLFPINQKIVNKFTNIIKQHKCRNEYLTQWYNHFLMPITLQSLSIELDGDIYYIFGYYDDMHKINQTPFSFANLINKYDVLLLDSINFDRMAFLPLTLQQEYALRYFSKSRFITERRKYIETLHFSDNILNNLHNPNFTLQVIRNCSNMSVEWNKACNLIRNISDYFDILKSSHTESYNISPRCRMFTQYKLKIASKLIKPNYVASNHNSLATEVHNCKWCSINNNSIVWTDFRIKNVYNDVFNFIRALVKSNLYVGHCSSEERIYESIKDILNVCKENEWNMLVTEIFNQLDPIKLNEDSYVLLNYEINWNVMNVLINSIGKIPKILTLNDVISILRIIIYDWFDIRFMRNTPMTTFTVNKLKQLYEKDKTAEYDSGISDVE</sequence>
<comment type="function">
    <text evidence="1">Plays a role in the inhibition of host innate immunity by inducing the degradation of key host factors required to activate interferon production such as IRF3, IRF5 or IRF7. Associates with components of cullin RING ligases (CRLs) including CUL1 or CUL3, which are essential multisubunit ubiquitination complexes, to modulate their activities. Recognizes the host NF-kappa-B regulator BTRC through the presence of a DSGXS motif in the C-terminal substrate recognition domain.</text>
</comment>
<comment type="subunit">
    <text evidence="1">Interacts (via C-terminus) with host IRF3; this interaction leads to IRF3 degradation. Interacts with host IRF7; this interaction leads to IRF7 degradation. Interacts with host CUL1 and CUL3. Interacts with host BTRC.</text>
</comment>
<comment type="subcellular location">
    <subcellularLocation>
        <location evidence="1">Host cytoplasm</location>
        <location evidence="1">Host cytoskeleton</location>
    </subcellularLocation>
</comment>
<comment type="domain">
    <text evidence="1">The integrity of the zinc-binding domain in NSP1 is important for degradation of host IRF3.</text>
</comment>
<comment type="domain">
    <text evidence="1">The pLxIS motif targets host IRF3 for degradation; however phosphorylation of NSP1 pLxIS motif is not required for its activity.</text>
</comment>
<comment type="PTM">
    <text evidence="1">The C-terminal region is phosphorylated by host CKII/CSNK2A1. Phosphorylation of the DSGXS motif is essential for host NF-kappa-B inhibition.</text>
</comment>
<comment type="similarity">
    <text evidence="1">Belongs to the rotavirus NSP1 family.</text>
</comment>
<organism>
    <name type="scientific">Rotavirus A (strain RVA/Human/Indonesia/69M/1980/G8P4[10])</name>
    <name type="common">RV-A</name>
    <dbReference type="NCBI Taxonomy" id="10947"/>
    <lineage>
        <taxon>Viruses</taxon>
        <taxon>Riboviria</taxon>
        <taxon>Orthornavirae</taxon>
        <taxon>Duplornaviricota</taxon>
        <taxon>Resentoviricetes</taxon>
        <taxon>Reovirales</taxon>
        <taxon>Sedoreoviridae</taxon>
        <taxon>Rotavirus</taxon>
        <taxon>Rotavirus A</taxon>
    </lineage>
</organism>
<keyword id="KW-1035">Host cytoplasm</keyword>
<keyword id="KW-1037">Host cytoskeleton</keyword>
<keyword id="KW-0945">Host-virus interaction</keyword>
<keyword id="KW-1090">Inhibition of host innate immune response by virus</keyword>
<keyword id="KW-1092">Inhibition of host IRF3 by virus</keyword>
<keyword id="KW-1093">Inhibition of host IRF7 by virus</keyword>
<keyword id="KW-1100">Inhibition of host NF-kappa-B by virus</keyword>
<keyword id="KW-1113">Inhibition of host RLR pathway by virus</keyword>
<keyword id="KW-0922">Interferon antiviral system evasion</keyword>
<keyword id="KW-0479">Metal-binding</keyword>
<keyword id="KW-0597">Phosphoprotein</keyword>
<keyword id="KW-0694">RNA-binding</keyword>
<keyword id="KW-0899">Viral immunoevasion</keyword>
<protein>
    <recommendedName>
        <fullName evidence="1">Non-structural protein 1</fullName>
        <shortName evidence="1">NSP1</shortName>
    </recommendedName>
    <alternativeName>
        <fullName evidence="1">NCVP2</fullName>
    </alternativeName>
    <alternativeName>
        <fullName evidence="1">Non-structural RNA-binding protein 53</fullName>
        <shortName evidence="1">NS53</shortName>
    </alternativeName>
</protein>
<organismHost>
    <name type="scientific">Homo sapiens</name>
    <name type="common">Human</name>
    <dbReference type="NCBI Taxonomy" id="9606"/>
</organismHost>
<evidence type="ECO:0000255" key="1">
    <source>
        <dbReference type="HAMAP-Rule" id="MF_04088"/>
    </source>
</evidence>
<reference key="1">
    <citation type="journal article" date="1996" name="Arch. Virol.">
        <title>Species-specific and interspecies relatedness of NSP1 sequences in human, porcine, bovine, feline, and equine rotavirus strains.</title>
        <authorList>
            <person name="Kojima K."/>
            <person name="Taniguchi K."/>
            <person name="Kobayashi N."/>
        </authorList>
    </citation>
    <scope>NUCLEOTIDE SEQUENCE [GENOMIC RNA]</scope>
</reference>
<reference key="2">
    <citation type="submission" date="1994-04" db="EMBL/GenBank/DDBJ databases">
        <authorList>
            <person name="McCrae M.A."/>
        </authorList>
    </citation>
    <scope>NUCLEOTIDE SEQUENCE [GENOMIC RNA]</scope>
</reference>
<reference key="3">
    <citation type="journal article" date="2008" name="J. Virol.">
        <title>Group A human rotavirus genomics: evidence that gene constellations are influenced by viral protein interactions.</title>
        <authorList>
            <person name="Heiman E.M."/>
            <person name="McDonald S.M."/>
            <person name="Barro M."/>
            <person name="Taraporewala Z.F."/>
            <person name="Bar-Magen T."/>
            <person name="Patton J.T."/>
        </authorList>
    </citation>
    <scope>NUCLEOTIDE SEQUENCE [GENOMIC DNA]</scope>
</reference>